<accession>A9R397</accession>
<sequence>MSDNHTEHSLSLTLTPTISEQPALPSTYLDSDIHCPILKQRLDAFQRWQAEAFNSGTSAEVLIAARSDYIDHLLQRLWTFYGFDKVPETALVAVGGYGRGELHPLSDIDVLVLSKQRLNDEQAQRVGQLITLLWDLKLEVGHSVRTLEECLLEGLADLTIATNMIESRLICGDVALFLQMQKHIFSDSFWPSPQFFHAKVVEQQERHKRYHGTSYNLEPDIKSSPGGLRDIHTLLWVARRHFGATSLSEMVDFGFLTNAERNELNESQSFLWRIRFALHLVLTRYDNRLLFDRQLSVAQLLRYEGEGNEPVEHMMKDFYRMTRRVSELNNMLLQLFDEAILALDANEKPRPLDEEFQLRGDLIDLRDENLFVRQPEAIMRMFYLMVRNQDIKGIYSTTVRRLRHARRHLKAPLCHIPEARKLFMAILRHPGAVSRALLPMHRHSVLWAYMPQWGSIVGQMQFDLFHAYTVDEHTIRVLLKIESFADEDTRPRHPLCVELYPRLPQPELLLLAALFHDIAKGRGGDHSILGAHDAVEFAEQHGLNSRESQLVAWLVRCHLLMSVTAQRRDIQDPAVIQQFSAEVQSETRLRYLVSLTVADICATNENLWNSWKQSLLRELYFATEKQLRRGMQNSPDLRERVRHHRLQALALLRMDNIDEEALHRIWSRCRADYFLRHSPNQLAWHARHLLEHDSTKPLVLVSRQATRGGTEIFIWSPDRPSLFAAVVGELDRRNLSVHDAQIFTNRDGMAMDTFIVLEPDGSPLAQDRHPIISHALQQAINRSDYQHPPRVRRLSPKLRHFSVPTEANFLPTHNERRTYLELIALDQPGLLARVGKIFADLGLSLHSARITTIGERVEDLFVLADKDRRALSLETRRELAQRLADTLNPNDKL</sequence>
<keyword id="KW-0378">Hydrolase</keyword>
<keyword id="KW-0460">Magnesium</keyword>
<keyword id="KW-0511">Multifunctional enzyme</keyword>
<keyword id="KW-0548">Nucleotidyltransferase</keyword>
<keyword id="KW-0677">Repeat</keyword>
<keyword id="KW-0808">Transferase</keyword>
<comment type="function">
    <text evidence="1">Modifies, by uridylylation and deuridylylation, the PII regulatory proteins (GlnB and homologs), in response to the nitrogen status of the cell that GlnD senses through the glutamine level. Under low glutamine levels, catalyzes the conversion of the PII proteins and UTP to PII-UMP and PPi, while under higher glutamine levels, GlnD hydrolyzes PII-UMP to PII and UMP (deuridylylation). Thus, controls uridylylation state and activity of the PII proteins, and plays an important role in the regulation of nitrogen assimilation and metabolism.</text>
</comment>
<comment type="catalytic activity">
    <reaction evidence="1">
        <text>[protein-PII]-L-tyrosine + UTP = [protein-PII]-uridylyl-L-tyrosine + diphosphate</text>
        <dbReference type="Rhea" id="RHEA:13673"/>
        <dbReference type="Rhea" id="RHEA-COMP:12147"/>
        <dbReference type="Rhea" id="RHEA-COMP:12148"/>
        <dbReference type="ChEBI" id="CHEBI:33019"/>
        <dbReference type="ChEBI" id="CHEBI:46398"/>
        <dbReference type="ChEBI" id="CHEBI:46858"/>
        <dbReference type="ChEBI" id="CHEBI:90602"/>
        <dbReference type="EC" id="2.7.7.59"/>
    </reaction>
</comment>
<comment type="catalytic activity">
    <reaction evidence="1">
        <text>[protein-PII]-uridylyl-L-tyrosine + H2O = [protein-PII]-L-tyrosine + UMP + H(+)</text>
        <dbReference type="Rhea" id="RHEA:48600"/>
        <dbReference type="Rhea" id="RHEA-COMP:12147"/>
        <dbReference type="Rhea" id="RHEA-COMP:12148"/>
        <dbReference type="ChEBI" id="CHEBI:15377"/>
        <dbReference type="ChEBI" id="CHEBI:15378"/>
        <dbReference type="ChEBI" id="CHEBI:46858"/>
        <dbReference type="ChEBI" id="CHEBI:57865"/>
        <dbReference type="ChEBI" id="CHEBI:90602"/>
    </reaction>
</comment>
<comment type="cofactor">
    <cofactor evidence="1">
        <name>Mg(2+)</name>
        <dbReference type="ChEBI" id="CHEBI:18420"/>
    </cofactor>
</comment>
<comment type="activity regulation">
    <text evidence="1">Uridylyltransferase (UTase) activity is inhibited by glutamine, while glutamine activates uridylyl-removing (UR) activity.</text>
</comment>
<comment type="domain">
    <text evidence="1">Has four distinct domains: an N-terminal nucleotidyltransferase (NT) domain responsible for UTase activity, a central HD domain that encodes UR activity, and two C-terminal ACT domains that seem to have a role in glutamine sensing.</text>
</comment>
<comment type="similarity">
    <text evidence="1">Belongs to the GlnD family.</text>
</comment>
<feature type="chain" id="PRO_1000114770" description="Bifunctional uridylyltransferase/uridylyl-removing enzyme">
    <location>
        <begin position="1"/>
        <end position="893"/>
    </location>
</feature>
<feature type="domain" description="HD" evidence="2">
    <location>
        <begin position="470"/>
        <end position="592"/>
    </location>
</feature>
<feature type="domain" description="ACT 1" evidence="1">
    <location>
        <begin position="711"/>
        <end position="793"/>
    </location>
</feature>
<feature type="domain" description="ACT 2" evidence="1">
    <location>
        <begin position="819"/>
        <end position="893"/>
    </location>
</feature>
<feature type="region of interest" description="Uridylyltransferase">
    <location>
        <begin position="1"/>
        <end position="351"/>
    </location>
</feature>
<feature type="region of interest" description="Uridylyl-removing">
    <location>
        <begin position="352"/>
        <end position="710"/>
    </location>
</feature>
<gene>
    <name evidence="1" type="primary">glnD</name>
    <name type="ordered locus">YpAngola_A3437</name>
</gene>
<organism>
    <name type="scientific">Yersinia pestis bv. Antiqua (strain Angola)</name>
    <dbReference type="NCBI Taxonomy" id="349746"/>
    <lineage>
        <taxon>Bacteria</taxon>
        <taxon>Pseudomonadati</taxon>
        <taxon>Pseudomonadota</taxon>
        <taxon>Gammaproteobacteria</taxon>
        <taxon>Enterobacterales</taxon>
        <taxon>Yersiniaceae</taxon>
        <taxon>Yersinia</taxon>
    </lineage>
</organism>
<proteinExistence type="inferred from homology"/>
<evidence type="ECO:0000255" key="1">
    <source>
        <dbReference type="HAMAP-Rule" id="MF_00277"/>
    </source>
</evidence>
<evidence type="ECO:0000255" key="2">
    <source>
        <dbReference type="PROSITE-ProRule" id="PRU01175"/>
    </source>
</evidence>
<name>GLND_YERPG</name>
<reference key="1">
    <citation type="journal article" date="2010" name="J. Bacteriol.">
        <title>Genome sequence of the deep-rooted Yersinia pestis strain Angola reveals new insights into the evolution and pangenome of the plague bacterium.</title>
        <authorList>
            <person name="Eppinger M."/>
            <person name="Worsham P.L."/>
            <person name="Nikolich M.P."/>
            <person name="Riley D.R."/>
            <person name="Sebastian Y."/>
            <person name="Mou S."/>
            <person name="Achtman M."/>
            <person name="Lindler L.E."/>
            <person name="Ravel J."/>
        </authorList>
    </citation>
    <scope>NUCLEOTIDE SEQUENCE [LARGE SCALE GENOMIC DNA]</scope>
    <source>
        <strain>Angola</strain>
    </source>
</reference>
<dbReference type="EC" id="2.7.7.59" evidence="1"/>
<dbReference type="EC" id="3.1.4.-" evidence="1"/>
<dbReference type="EMBL" id="CP000901">
    <property type="protein sequence ID" value="ABX88111.1"/>
    <property type="molecule type" value="Genomic_DNA"/>
</dbReference>
<dbReference type="RefSeq" id="WP_002212129.1">
    <property type="nucleotide sequence ID" value="NZ_CP009935.1"/>
</dbReference>
<dbReference type="SMR" id="A9R397"/>
<dbReference type="GeneID" id="57977519"/>
<dbReference type="KEGG" id="ypg:YpAngola_A3437"/>
<dbReference type="PATRIC" id="fig|349746.12.peg.133"/>
<dbReference type="GO" id="GO:0008773">
    <property type="term" value="F:[protein-PII] uridylyltransferase activity"/>
    <property type="evidence" value="ECO:0007669"/>
    <property type="project" value="UniProtKB-UniRule"/>
</dbReference>
<dbReference type="GO" id="GO:0008081">
    <property type="term" value="F:phosphoric diester hydrolase activity"/>
    <property type="evidence" value="ECO:0007669"/>
    <property type="project" value="UniProtKB-UniRule"/>
</dbReference>
<dbReference type="GO" id="GO:0006808">
    <property type="term" value="P:regulation of nitrogen utilization"/>
    <property type="evidence" value="ECO:0007669"/>
    <property type="project" value="UniProtKB-UniRule"/>
</dbReference>
<dbReference type="CDD" id="cd04899">
    <property type="entry name" value="ACT_ACR-UUR-like_2"/>
    <property type="match status" value="1"/>
</dbReference>
<dbReference type="CDD" id="cd04900">
    <property type="entry name" value="ACT_UUR-like_1"/>
    <property type="match status" value="1"/>
</dbReference>
<dbReference type="CDD" id="cd00077">
    <property type="entry name" value="HDc"/>
    <property type="match status" value="1"/>
</dbReference>
<dbReference type="CDD" id="cd05401">
    <property type="entry name" value="NT_GlnE_GlnD_like"/>
    <property type="match status" value="1"/>
</dbReference>
<dbReference type="FunFam" id="1.10.3210.10:FF:000005">
    <property type="entry name" value="Bifunctional uridylyltransferase/uridylyl-removing enzyme"/>
    <property type="match status" value="1"/>
</dbReference>
<dbReference type="Gene3D" id="1.10.3210.10">
    <property type="entry name" value="Hypothetical protein af1432"/>
    <property type="match status" value="1"/>
</dbReference>
<dbReference type="HAMAP" id="MF_00277">
    <property type="entry name" value="PII_uridylyl_transf"/>
    <property type="match status" value="1"/>
</dbReference>
<dbReference type="InterPro" id="IPR045865">
    <property type="entry name" value="ACT-like_dom_sf"/>
</dbReference>
<dbReference type="InterPro" id="IPR002912">
    <property type="entry name" value="ACT_dom"/>
</dbReference>
<dbReference type="InterPro" id="IPR003607">
    <property type="entry name" value="HD/PDEase_dom"/>
</dbReference>
<dbReference type="InterPro" id="IPR006674">
    <property type="entry name" value="HD_domain"/>
</dbReference>
<dbReference type="InterPro" id="IPR043519">
    <property type="entry name" value="NT_sf"/>
</dbReference>
<dbReference type="InterPro" id="IPR013546">
    <property type="entry name" value="PII_UdlTrfase/GS_AdlTrfase"/>
</dbReference>
<dbReference type="InterPro" id="IPR002934">
    <property type="entry name" value="Polymerase_NTP_transf_dom"/>
</dbReference>
<dbReference type="InterPro" id="IPR010043">
    <property type="entry name" value="UTase/UR"/>
</dbReference>
<dbReference type="NCBIfam" id="NF002487">
    <property type="entry name" value="PRK01759.1"/>
    <property type="match status" value="1"/>
</dbReference>
<dbReference type="NCBIfam" id="NF003448">
    <property type="entry name" value="PRK05007.1"/>
    <property type="match status" value="1"/>
</dbReference>
<dbReference type="NCBIfam" id="TIGR01693">
    <property type="entry name" value="UTase_glnD"/>
    <property type="match status" value="1"/>
</dbReference>
<dbReference type="PANTHER" id="PTHR47320">
    <property type="entry name" value="BIFUNCTIONAL URIDYLYLTRANSFERASE/URIDYLYL-REMOVING ENZYME"/>
    <property type="match status" value="1"/>
</dbReference>
<dbReference type="PANTHER" id="PTHR47320:SF1">
    <property type="entry name" value="BIFUNCTIONAL URIDYLYLTRANSFERASE_URIDYLYL-REMOVING ENZYME"/>
    <property type="match status" value="1"/>
</dbReference>
<dbReference type="Pfam" id="PF01842">
    <property type="entry name" value="ACT"/>
    <property type="match status" value="1"/>
</dbReference>
<dbReference type="Pfam" id="PF08335">
    <property type="entry name" value="GlnD_UR_UTase"/>
    <property type="match status" value="1"/>
</dbReference>
<dbReference type="Pfam" id="PF01966">
    <property type="entry name" value="HD"/>
    <property type="match status" value="1"/>
</dbReference>
<dbReference type="Pfam" id="PF01909">
    <property type="entry name" value="NTP_transf_2"/>
    <property type="match status" value="1"/>
</dbReference>
<dbReference type="PIRSF" id="PIRSF006288">
    <property type="entry name" value="PII_uridyltransf"/>
    <property type="match status" value="1"/>
</dbReference>
<dbReference type="SMART" id="SM00471">
    <property type="entry name" value="HDc"/>
    <property type="match status" value="1"/>
</dbReference>
<dbReference type="SUPFAM" id="SSF55021">
    <property type="entry name" value="ACT-like"/>
    <property type="match status" value="2"/>
</dbReference>
<dbReference type="SUPFAM" id="SSF109604">
    <property type="entry name" value="HD-domain/PDEase-like"/>
    <property type="match status" value="1"/>
</dbReference>
<dbReference type="SUPFAM" id="SSF81301">
    <property type="entry name" value="Nucleotidyltransferase"/>
    <property type="match status" value="1"/>
</dbReference>
<dbReference type="SUPFAM" id="SSF81593">
    <property type="entry name" value="Nucleotidyltransferase substrate binding subunit/domain"/>
    <property type="match status" value="1"/>
</dbReference>
<dbReference type="SUPFAM" id="SSF81891">
    <property type="entry name" value="Poly A polymerase C-terminal region-like"/>
    <property type="match status" value="1"/>
</dbReference>
<dbReference type="PROSITE" id="PS51671">
    <property type="entry name" value="ACT"/>
    <property type="match status" value="2"/>
</dbReference>
<dbReference type="PROSITE" id="PS51831">
    <property type="entry name" value="HD"/>
    <property type="match status" value="1"/>
</dbReference>
<protein>
    <recommendedName>
        <fullName evidence="1">Bifunctional uridylyltransferase/uridylyl-removing enzyme</fullName>
        <shortName evidence="1">UTase/UR</shortName>
    </recommendedName>
    <alternativeName>
        <fullName evidence="1">Bifunctional [protein-PII] modification enzyme</fullName>
    </alternativeName>
    <alternativeName>
        <fullName evidence="1">Bifunctional nitrogen sensor protein</fullName>
    </alternativeName>
    <domain>
        <recommendedName>
            <fullName evidence="1">[Protein-PII] uridylyltransferase</fullName>
            <shortName evidence="1">PII uridylyltransferase</shortName>
            <shortName evidence="1">UTase</shortName>
            <ecNumber evidence="1">2.7.7.59</ecNumber>
        </recommendedName>
    </domain>
    <domain>
        <recommendedName>
            <fullName evidence="1">[Protein-PII]-UMP uridylyl-removing enzyme</fullName>
            <shortName evidence="1">UR</shortName>
            <ecNumber evidence="1">3.1.4.-</ecNumber>
        </recommendedName>
    </domain>
</protein>